<feature type="chain" id="PRO_1000019246" description="Enolase">
    <location>
        <begin position="1"/>
        <end position="431"/>
    </location>
</feature>
<feature type="active site" description="Proton donor" evidence="1">
    <location>
        <position position="209"/>
    </location>
</feature>
<feature type="active site" description="Proton acceptor" evidence="1">
    <location>
        <position position="341"/>
    </location>
</feature>
<feature type="binding site" evidence="1">
    <location>
        <position position="167"/>
    </location>
    <ligand>
        <name>(2R)-2-phosphoglycerate</name>
        <dbReference type="ChEBI" id="CHEBI:58289"/>
    </ligand>
</feature>
<feature type="binding site" evidence="1">
    <location>
        <position position="246"/>
    </location>
    <ligand>
        <name>Mg(2+)</name>
        <dbReference type="ChEBI" id="CHEBI:18420"/>
    </ligand>
</feature>
<feature type="binding site" evidence="1">
    <location>
        <position position="289"/>
    </location>
    <ligand>
        <name>Mg(2+)</name>
        <dbReference type="ChEBI" id="CHEBI:18420"/>
    </ligand>
</feature>
<feature type="binding site" evidence="1">
    <location>
        <position position="316"/>
    </location>
    <ligand>
        <name>Mg(2+)</name>
        <dbReference type="ChEBI" id="CHEBI:18420"/>
    </ligand>
</feature>
<feature type="binding site" evidence="1">
    <location>
        <position position="341"/>
    </location>
    <ligand>
        <name>(2R)-2-phosphoglycerate</name>
        <dbReference type="ChEBI" id="CHEBI:58289"/>
    </ligand>
</feature>
<feature type="binding site" evidence="1">
    <location>
        <position position="370"/>
    </location>
    <ligand>
        <name>(2R)-2-phosphoglycerate</name>
        <dbReference type="ChEBI" id="CHEBI:58289"/>
    </ligand>
</feature>
<feature type="binding site" evidence="1">
    <location>
        <position position="371"/>
    </location>
    <ligand>
        <name>(2R)-2-phosphoglycerate</name>
        <dbReference type="ChEBI" id="CHEBI:58289"/>
    </ligand>
</feature>
<feature type="binding site" evidence="1">
    <location>
        <position position="392"/>
    </location>
    <ligand>
        <name>(2R)-2-phosphoglycerate</name>
        <dbReference type="ChEBI" id="CHEBI:58289"/>
    </ligand>
</feature>
<accession>A6WR28</accession>
<organism>
    <name type="scientific">Shewanella baltica (strain OS185)</name>
    <dbReference type="NCBI Taxonomy" id="402882"/>
    <lineage>
        <taxon>Bacteria</taxon>
        <taxon>Pseudomonadati</taxon>
        <taxon>Pseudomonadota</taxon>
        <taxon>Gammaproteobacteria</taxon>
        <taxon>Alteromonadales</taxon>
        <taxon>Shewanellaceae</taxon>
        <taxon>Shewanella</taxon>
    </lineage>
</organism>
<keyword id="KW-0963">Cytoplasm</keyword>
<keyword id="KW-0324">Glycolysis</keyword>
<keyword id="KW-0456">Lyase</keyword>
<keyword id="KW-0460">Magnesium</keyword>
<keyword id="KW-0479">Metal-binding</keyword>
<keyword id="KW-0964">Secreted</keyword>
<sequence length="431" mass="45804">MAKIINVIGREIMDSRGNPTVEAEVHLEGGFVGMAAAPSGASTGSREALELRDGDKSRYLGKGVLTAVANVNDLIRTALLGKDATAQAELDQIMIDLDGTENKDKLGANAILAVSLAAAKAAAAFKGIPLYAHIAELNGTPGQYSMPVPMMNILNGGEHADNNVDIQEFMVQPVGAKTFREALRMGAEIFHTLKKVLHDKGLSTSVGDEGGFAPNLASNADALAIIKEAVELAGYKLGSDVTLALDCAASEFYKDGKYDLAGEGKVFDSNGFSDFLKSLADQYPIVSIEDGLDESDWDGWAYQTQIMGDKIQLVGDDLFVTNTKILTRGIENGIANSILIKFNQIGSLTETLAAIRMAKEAGYTAVISHRSGETEDSTIADLAVGTAAGQIKTGSLCRSDRVAKYNQLLRIEEQLGEKAPYRGLKEIKGQA</sequence>
<evidence type="ECO:0000255" key="1">
    <source>
        <dbReference type="HAMAP-Rule" id="MF_00318"/>
    </source>
</evidence>
<gene>
    <name evidence="1" type="primary">eno</name>
    <name type="ordered locus">Shew185_3136</name>
</gene>
<comment type="function">
    <text evidence="1">Catalyzes the reversible conversion of 2-phosphoglycerate (2-PG) into phosphoenolpyruvate (PEP). It is essential for the degradation of carbohydrates via glycolysis.</text>
</comment>
<comment type="catalytic activity">
    <reaction evidence="1">
        <text>(2R)-2-phosphoglycerate = phosphoenolpyruvate + H2O</text>
        <dbReference type="Rhea" id="RHEA:10164"/>
        <dbReference type="ChEBI" id="CHEBI:15377"/>
        <dbReference type="ChEBI" id="CHEBI:58289"/>
        <dbReference type="ChEBI" id="CHEBI:58702"/>
        <dbReference type="EC" id="4.2.1.11"/>
    </reaction>
</comment>
<comment type="cofactor">
    <cofactor evidence="1">
        <name>Mg(2+)</name>
        <dbReference type="ChEBI" id="CHEBI:18420"/>
    </cofactor>
    <text evidence="1">Binds a second Mg(2+) ion via substrate during catalysis.</text>
</comment>
<comment type="pathway">
    <text evidence="1">Carbohydrate degradation; glycolysis; pyruvate from D-glyceraldehyde 3-phosphate: step 4/5.</text>
</comment>
<comment type="subunit">
    <text evidence="1">Component of the RNA degradosome, a multiprotein complex involved in RNA processing and mRNA degradation.</text>
</comment>
<comment type="subcellular location">
    <subcellularLocation>
        <location evidence="1">Cytoplasm</location>
    </subcellularLocation>
    <subcellularLocation>
        <location evidence="1">Secreted</location>
    </subcellularLocation>
    <subcellularLocation>
        <location evidence="1">Cell surface</location>
    </subcellularLocation>
    <text evidence="1">Fractions of enolase are present in both the cytoplasm and on the cell surface.</text>
</comment>
<comment type="similarity">
    <text evidence="1">Belongs to the enolase family.</text>
</comment>
<name>ENO_SHEB8</name>
<protein>
    <recommendedName>
        <fullName evidence="1">Enolase</fullName>
        <ecNumber evidence="1">4.2.1.11</ecNumber>
    </recommendedName>
    <alternativeName>
        <fullName evidence="1">2-phospho-D-glycerate hydro-lyase</fullName>
    </alternativeName>
    <alternativeName>
        <fullName evidence="1">2-phosphoglycerate dehydratase</fullName>
    </alternativeName>
</protein>
<dbReference type="EC" id="4.2.1.11" evidence="1"/>
<dbReference type="EMBL" id="CP000753">
    <property type="protein sequence ID" value="ABS09267.1"/>
    <property type="molecule type" value="Genomic_DNA"/>
</dbReference>
<dbReference type="RefSeq" id="WP_012089811.1">
    <property type="nucleotide sequence ID" value="NC_009665.1"/>
</dbReference>
<dbReference type="SMR" id="A6WR28"/>
<dbReference type="KEGG" id="sbm:Shew185_3136"/>
<dbReference type="HOGENOM" id="CLU_031223_2_1_6"/>
<dbReference type="UniPathway" id="UPA00109">
    <property type="reaction ID" value="UER00187"/>
</dbReference>
<dbReference type="GO" id="GO:0009986">
    <property type="term" value="C:cell surface"/>
    <property type="evidence" value="ECO:0007669"/>
    <property type="project" value="UniProtKB-SubCell"/>
</dbReference>
<dbReference type="GO" id="GO:0005576">
    <property type="term" value="C:extracellular region"/>
    <property type="evidence" value="ECO:0007669"/>
    <property type="project" value="UniProtKB-SubCell"/>
</dbReference>
<dbReference type="GO" id="GO:0000015">
    <property type="term" value="C:phosphopyruvate hydratase complex"/>
    <property type="evidence" value="ECO:0007669"/>
    <property type="project" value="InterPro"/>
</dbReference>
<dbReference type="GO" id="GO:0000287">
    <property type="term" value="F:magnesium ion binding"/>
    <property type="evidence" value="ECO:0007669"/>
    <property type="project" value="UniProtKB-UniRule"/>
</dbReference>
<dbReference type="GO" id="GO:0004634">
    <property type="term" value="F:phosphopyruvate hydratase activity"/>
    <property type="evidence" value="ECO:0007669"/>
    <property type="project" value="UniProtKB-UniRule"/>
</dbReference>
<dbReference type="GO" id="GO:0006096">
    <property type="term" value="P:glycolytic process"/>
    <property type="evidence" value="ECO:0007669"/>
    <property type="project" value="UniProtKB-UniRule"/>
</dbReference>
<dbReference type="CDD" id="cd03313">
    <property type="entry name" value="enolase"/>
    <property type="match status" value="1"/>
</dbReference>
<dbReference type="FunFam" id="3.20.20.120:FF:000001">
    <property type="entry name" value="Enolase"/>
    <property type="match status" value="1"/>
</dbReference>
<dbReference type="FunFam" id="3.30.390.10:FF:000001">
    <property type="entry name" value="Enolase"/>
    <property type="match status" value="1"/>
</dbReference>
<dbReference type="Gene3D" id="3.20.20.120">
    <property type="entry name" value="Enolase-like C-terminal domain"/>
    <property type="match status" value="1"/>
</dbReference>
<dbReference type="Gene3D" id="3.30.390.10">
    <property type="entry name" value="Enolase-like, N-terminal domain"/>
    <property type="match status" value="1"/>
</dbReference>
<dbReference type="HAMAP" id="MF_00318">
    <property type="entry name" value="Enolase"/>
    <property type="match status" value="1"/>
</dbReference>
<dbReference type="InterPro" id="IPR000941">
    <property type="entry name" value="Enolase"/>
</dbReference>
<dbReference type="InterPro" id="IPR036849">
    <property type="entry name" value="Enolase-like_C_sf"/>
</dbReference>
<dbReference type="InterPro" id="IPR029017">
    <property type="entry name" value="Enolase-like_N"/>
</dbReference>
<dbReference type="InterPro" id="IPR020810">
    <property type="entry name" value="Enolase_C"/>
</dbReference>
<dbReference type="InterPro" id="IPR020809">
    <property type="entry name" value="Enolase_CS"/>
</dbReference>
<dbReference type="InterPro" id="IPR020811">
    <property type="entry name" value="Enolase_N"/>
</dbReference>
<dbReference type="NCBIfam" id="TIGR01060">
    <property type="entry name" value="eno"/>
    <property type="match status" value="1"/>
</dbReference>
<dbReference type="PANTHER" id="PTHR11902">
    <property type="entry name" value="ENOLASE"/>
    <property type="match status" value="1"/>
</dbReference>
<dbReference type="PANTHER" id="PTHR11902:SF1">
    <property type="entry name" value="ENOLASE"/>
    <property type="match status" value="1"/>
</dbReference>
<dbReference type="Pfam" id="PF00113">
    <property type="entry name" value="Enolase_C"/>
    <property type="match status" value="1"/>
</dbReference>
<dbReference type="Pfam" id="PF03952">
    <property type="entry name" value="Enolase_N"/>
    <property type="match status" value="1"/>
</dbReference>
<dbReference type="PIRSF" id="PIRSF001400">
    <property type="entry name" value="Enolase"/>
    <property type="match status" value="1"/>
</dbReference>
<dbReference type="PRINTS" id="PR00148">
    <property type="entry name" value="ENOLASE"/>
</dbReference>
<dbReference type="SFLD" id="SFLDF00002">
    <property type="entry name" value="enolase"/>
    <property type="match status" value="1"/>
</dbReference>
<dbReference type="SFLD" id="SFLDG00178">
    <property type="entry name" value="enolase"/>
    <property type="match status" value="1"/>
</dbReference>
<dbReference type="SMART" id="SM01192">
    <property type="entry name" value="Enolase_C"/>
    <property type="match status" value="1"/>
</dbReference>
<dbReference type="SMART" id="SM01193">
    <property type="entry name" value="Enolase_N"/>
    <property type="match status" value="1"/>
</dbReference>
<dbReference type="SUPFAM" id="SSF51604">
    <property type="entry name" value="Enolase C-terminal domain-like"/>
    <property type="match status" value="1"/>
</dbReference>
<dbReference type="SUPFAM" id="SSF54826">
    <property type="entry name" value="Enolase N-terminal domain-like"/>
    <property type="match status" value="1"/>
</dbReference>
<dbReference type="PROSITE" id="PS00164">
    <property type="entry name" value="ENOLASE"/>
    <property type="match status" value="1"/>
</dbReference>
<reference key="1">
    <citation type="submission" date="2007-07" db="EMBL/GenBank/DDBJ databases">
        <title>Complete sequence of chromosome of Shewanella baltica OS185.</title>
        <authorList>
            <consortium name="US DOE Joint Genome Institute"/>
            <person name="Copeland A."/>
            <person name="Lucas S."/>
            <person name="Lapidus A."/>
            <person name="Barry K."/>
            <person name="Glavina del Rio T."/>
            <person name="Dalin E."/>
            <person name="Tice H."/>
            <person name="Pitluck S."/>
            <person name="Sims D."/>
            <person name="Brettin T."/>
            <person name="Bruce D."/>
            <person name="Detter J.C."/>
            <person name="Han C."/>
            <person name="Schmutz J."/>
            <person name="Larimer F."/>
            <person name="Land M."/>
            <person name="Hauser L."/>
            <person name="Kyrpides N."/>
            <person name="Mikhailova N."/>
            <person name="Brettar I."/>
            <person name="Rodrigues J."/>
            <person name="Konstantinidis K."/>
            <person name="Tiedje J."/>
            <person name="Richardson P."/>
        </authorList>
    </citation>
    <scope>NUCLEOTIDE SEQUENCE [LARGE SCALE GENOMIC DNA]</scope>
    <source>
        <strain>OS185</strain>
    </source>
</reference>
<proteinExistence type="inferred from homology"/>